<reference key="1">
    <citation type="submission" date="2007-12" db="EMBL/GenBank/DDBJ databases">
        <title>Complete sequence of chromosome of Francisella philomiragia subsp. philomiragia ATCC 25017.</title>
        <authorList>
            <consortium name="US DOE Joint Genome Institute"/>
            <person name="Copeland A."/>
            <person name="Lucas S."/>
            <person name="Lapidus A."/>
            <person name="Barry K."/>
            <person name="Detter J.C."/>
            <person name="Glavina del Rio T."/>
            <person name="Hammon N."/>
            <person name="Israni S."/>
            <person name="Dalin E."/>
            <person name="Tice H."/>
            <person name="Pitluck S."/>
            <person name="Chain P."/>
            <person name="Malfatti S."/>
            <person name="Shin M."/>
            <person name="Vergez L."/>
            <person name="Schmutz J."/>
            <person name="Larimer F."/>
            <person name="Land M."/>
            <person name="Hauser L."/>
            <person name="Richardson P."/>
        </authorList>
    </citation>
    <scope>NUCLEOTIDE SEQUENCE [LARGE SCALE GENOMIC DNA]</scope>
    <source>
        <strain>ATCC 25017 / CCUG 19701 / FSC 153 / O#319-036</strain>
    </source>
</reference>
<gene>
    <name evidence="1" type="primary">hfq</name>
    <name type="ordered locus">Fphi_1538</name>
</gene>
<dbReference type="EMBL" id="CP000937">
    <property type="protein sequence ID" value="ABZ87764.1"/>
    <property type="molecule type" value="Genomic_DNA"/>
</dbReference>
<dbReference type="SMR" id="B0TZB1"/>
<dbReference type="KEGG" id="fph:Fphi_1538"/>
<dbReference type="eggNOG" id="COG1923">
    <property type="taxonomic scope" value="Bacteria"/>
</dbReference>
<dbReference type="HOGENOM" id="CLU_113688_2_2_6"/>
<dbReference type="GO" id="GO:0005829">
    <property type="term" value="C:cytosol"/>
    <property type="evidence" value="ECO:0007669"/>
    <property type="project" value="TreeGrafter"/>
</dbReference>
<dbReference type="GO" id="GO:0003723">
    <property type="term" value="F:RNA binding"/>
    <property type="evidence" value="ECO:0007669"/>
    <property type="project" value="UniProtKB-UniRule"/>
</dbReference>
<dbReference type="GO" id="GO:0006355">
    <property type="term" value="P:regulation of DNA-templated transcription"/>
    <property type="evidence" value="ECO:0007669"/>
    <property type="project" value="InterPro"/>
</dbReference>
<dbReference type="GO" id="GO:0043487">
    <property type="term" value="P:regulation of RNA stability"/>
    <property type="evidence" value="ECO:0007669"/>
    <property type="project" value="TreeGrafter"/>
</dbReference>
<dbReference type="GO" id="GO:0045974">
    <property type="term" value="P:regulation of translation, ncRNA-mediated"/>
    <property type="evidence" value="ECO:0007669"/>
    <property type="project" value="TreeGrafter"/>
</dbReference>
<dbReference type="CDD" id="cd01716">
    <property type="entry name" value="Hfq"/>
    <property type="match status" value="1"/>
</dbReference>
<dbReference type="FunFam" id="2.30.30.100:FF:000001">
    <property type="entry name" value="RNA-binding protein Hfq"/>
    <property type="match status" value="1"/>
</dbReference>
<dbReference type="Gene3D" id="2.30.30.100">
    <property type="match status" value="1"/>
</dbReference>
<dbReference type="HAMAP" id="MF_00436">
    <property type="entry name" value="Hfq"/>
    <property type="match status" value="1"/>
</dbReference>
<dbReference type="InterPro" id="IPR005001">
    <property type="entry name" value="Hfq"/>
</dbReference>
<dbReference type="InterPro" id="IPR010920">
    <property type="entry name" value="LSM_dom_sf"/>
</dbReference>
<dbReference type="InterPro" id="IPR047575">
    <property type="entry name" value="Sm"/>
</dbReference>
<dbReference type="NCBIfam" id="TIGR02383">
    <property type="entry name" value="Hfq"/>
    <property type="match status" value="1"/>
</dbReference>
<dbReference type="NCBIfam" id="NF001602">
    <property type="entry name" value="PRK00395.1"/>
    <property type="match status" value="1"/>
</dbReference>
<dbReference type="PANTHER" id="PTHR34772">
    <property type="entry name" value="RNA-BINDING PROTEIN HFQ"/>
    <property type="match status" value="1"/>
</dbReference>
<dbReference type="PANTHER" id="PTHR34772:SF1">
    <property type="entry name" value="RNA-BINDING PROTEIN HFQ"/>
    <property type="match status" value="1"/>
</dbReference>
<dbReference type="Pfam" id="PF17209">
    <property type="entry name" value="Hfq"/>
    <property type="match status" value="1"/>
</dbReference>
<dbReference type="SUPFAM" id="SSF50182">
    <property type="entry name" value="Sm-like ribonucleoproteins"/>
    <property type="match status" value="1"/>
</dbReference>
<dbReference type="PROSITE" id="PS52002">
    <property type="entry name" value="SM"/>
    <property type="match status" value="1"/>
</dbReference>
<name>HFQ_FRAP2</name>
<proteinExistence type="inferred from homology"/>
<accession>B0TZB1</accession>
<sequence>MSRISSLQDPFLNALRKEKVSVSVYLVNGIKLQGQVEAFDQFCIVLRNTVNQMVYKHAISTIVPAKSVRMVYSSFNPYHQNANDDQDENVDDIHSDELEVQENQENINE</sequence>
<feature type="chain" id="PRO_1000080665" description="RNA-binding protein Hfq">
    <location>
        <begin position="1"/>
        <end position="109"/>
    </location>
</feature>
<feature type="domain" description="Sm" evidence="2">
    <location>
        <begin position="9"/>
        <end position="68"/>
    </location>
</feature>
<organism>
    <name type="scientific">Francisella philomiragia subsp. philomiragia (strain ATCC 25017 / CCUG 19701 / FSC 153 / O#319-036)</name>
    <dbReference type="NCBI Taxonomy" id="484022"/>
    <lineage>
        <taxon>Bacteria</taxon>
        <taxon>Pseudomonadati</taxon>
        <taxon>Pseudomonadota</taxon>
        <taxon>Gammaproteobacteria</taxon>
        <taxon>Thiotrichales</taxon>
        <taxon>Francisellaceae</taxon>
        <taxon>Francisella</taxon>
    </lineage>
</organism>
<keyword id="KW-0694">RNA-binding</keyword>
<keyword id="KW-0346">Stress response</keyword>
<comment type="function">
    <text evidence="1">RNA chaperone that binds small regulatory RNA (sRNAs) and mRNAs to facilitate mRNA translational regulation in response to envelope stress, environmental stress and changes in metabolite concentrations. Also binds with high specificity to tRNAs.</text>
</comment>
<comment type="subunit">
    <text evidence="1">Homohexamer.</text>
</comment>
<comment type="similarity">
    <text evidence="1">Belongs to the Hfq family.</text>
</comment>
<evidence type="ECO:0000255" key="1">
    <source>
        <dbReference type="HAMAP-Rule" id="MF_00436"/>
    </source>
</evidence>
<evidence type="ECO:0000255" key="2">
    <source>
        <dbReference type="PROSITE-ProRule" id="PRU01346"/>
    </source>
</evidence>
<protein>
    <recommendedName>
        <fullName evidence="1">RNA-binding protein Hfq</fullName>
    </recommendedName>
</protein>